<sequence length="67" mass="7057">VRDGYIAQPENCVYHCFPGSSGCDTLCKEKGGTSGHCGFKVGHGLACWCNALPDNVGIIVEGEKCHS</sequence>
<dbReference type="PDB" id="1BMR">
    <property type="method" value="NMR"/>
    <property type="chains" value="A=1-67"/>
</dbReference>
<dbReference type="PDB" id="1FH3">
    <property type="method" value="NMR"/>
    <property type="chains" value="A=1-67"/>
</dbReference>
<dbReference type="PDB" id="7K18">
    <property type="method" value="EM"/>
    <property type="resolution" value="3.30 A"/>
    <property type="chains" value="B=1-67"/>
</dbReference>
<dbReference type="PDB" id="7XSU">
    <property type="method" value="EM"/>
    <property type="resolution" value="3.40 A"/>
    <property type="chains" value="B=1-67"/>
</dbReference>
<dbReference type="PDBsum" id="1BMR"/>
<dbReference type="PDBsum" id="1FH3"/>
<dbReference type="PDBsum" id="7K18"/>
<dbReference type="PDBsum" id="7XSU"/>
<dbReference type="BMRB" id="P56678"/>
<dbReference type="EMDB" id="EMD-22621"/>
<dbReference type="EMDB" id="EMD-33435"/>
<dbReference type="SMR" id="P56678"/>
<dbReference type="TCDB" id="8.B.1.1.8">
    <property type="family name" value="the long (4c-c) scorpion toxin (l-st) superfamily"/>
</dbReference>
<dbReference type="EvolutionaryTrace" id="P56678"/>
<dbReference type="GO" id="GO:0005576">
    <property type="term" value="C:extracellular region"/>
    <property type="evidence" value="ECO:0007669"/>
    <property type="project" value="UniProtKB-SubCell"/>
</dbReference>
<dbReference type="GO" id="GO:0019871">
    <property type="term" value="F:sodium channel inhibitor activity"/>
    <property type="evidence" value="ECO:0007669"/>
    <property type="project" value="InterPro"/>
</dbReference>
<dbReference type="GO" id="GO:0090729">
    <property type="term" value="F:toxin activity"/>
    <property type="evidence" value="ECO:0007669"/>
    <property type="project" value="UniProtKB-KW"/>
</dbReference>
<dbReference type="GO" id="GO:0006952">
    <property type="term" value="P:defense response"/>
    <property type="evidence" value="ECO:0007669"/>
    <property type="project" value="InterPro"/>
</dbReference>
<dbReference type="CDD" id="cd23106">
    <property type="entry name" value="neurotoxins_LC_scorpion"/>
    <property type="match status" value="1"/>
</dbReference>
<dbReference type="Gene3D" id="3.30.30.10">
    <property type="entry name" value="Knottin, scorpion toxin-like"/>
    <property type="match status" value="1"/>
</dbReference>
<dbReference type="InterPro" id="IPR044062">
    <property type="entry name" value="LCN-type_CS_alpha_beta_dom"/>
</dbReference>
<dbReference type="InterPro" id="IPR003614">
    <property type="entry name" value="Scorpion_toxin-like"/>
</dbReference>
<dbReference type="InterPro" id="IPR036574">
    <property type="entry name" value="Scorpion_toxin-like_sf"/>
</dbReference>
<dbReference type="InterPro" id="IPR018218">
    <property type="entry name" value="Scorpion_toxinL"/>
</dbReference>
<dbReference type="InterPro" id="IPR002061">
    <property type="entry name" value="Scorpion_toxinL/defensin"/>
</dbReference>
<dbReference type="Pfam" id="PF00537">
    <property type="entry name" value="Toxin_3"/>
    <property type="match status" value="1"/>
</dbReference>
<dbReference type="PRINTS" id="PR00285">
    <property type="entry name" value="SCORPNTOXIN"/>
</dbReference>
<dbReference type="SMART" id="SM00505">
    <property type="entry name" value="Knot1"/>
    <property type="match status" value="1"/>
</dbReference>
<dbReference type="SUPFAM" id="SSF57095">
    <property type="entry name" value="Scorpion toxin-like"/>
    <property type="match status" value="1"/>
</dbReference>
<dbReference type="PROSITE" id="PS51863">
    <property type="entry name" value="LCN_CSAB"/>
    <property type="match status" value="1"/>
</dbReference>
<name>SCL3_LEIHE</name>
<evidence type="ECO:0000255" key="1">
    <source>
        <dbReference type="PROSITE-ProRule" id="PRU01210"/>
    </source>
</evidence>
<evidence type="ECO:0000269" key="2">
    <source>
    </source>
</evidence>
<evidence type="ECO:0000269" key="3">
    <source>
    </source>
</evidence>
<evidence type="ECO:0000269" key="4">
    <source>
    </source>
</evidence>
<evidence type="ECO:0000269" key="5">
    <source>
    </source>
</evidence>
<evidence type="ECO:0000269" key="6">
    <source>
    </source>
</evidence>
<evidence type="ECO:0000305" key="7"/>
<evidence type="ECO:0000305" key="8">
    <source>
    </source>
</evidence>
<evidence type="ECO:0007829" key="9">
    <source>
        <dbReference type="PDB" id="1BMR"/>
    </source>
</evidence>
<evidence type="ECO:0007829" key="10">
    <source>
        <dbReference type="PDB" id="7K18"/>
    </source>
</evidence>
<evidence type="ECO:0007829" key="11">
    <source>
        <dbReference type="PDB" id="7XSU"/>
    </source>
</evidence>
<reference key="1">
    <citation type="journal article" date="1998" name="Toxicon">
        <title>New toxins acting on sodium channels from the scorpion Leiurus quinquestriatus hebraeus suggest a clue to mammalian vs insect selectivity.</title>
        <authorList>
            <person name="Sautiere P."/>
            <person name="Cestele S."/>
            <person name="Kopeyan C."/>
            <person name="Martinage A."/>
            <person name="Drobecq H."/>
            <person name="Doljansky Y."/>
            <person name="Gordon D."/>
        </authorList>
    </citation>
    <scope>PROTEIN SEQUENCE</scope>
    <scope>FUNCTION</scope>
    <scope>AMIDATION AT SER-67</scope>
    <scope>TOXIC DOSE</scope>
    <scope>SUBCELLULAR LOCATION</scope>
    <source>
        <tissue>Venom</tissue>
    </source>
</reference>
<reference key="2">
    <citation type="journal article" date="2000" name="Pflugers Arch.">
        <title>Modulation of cloned skeletal muscle sodium channels by the scorpion toxins Lqh II, Lqh III, and Lqh alphaIT.</title>
        <authorList>
            <person name="Chen H."/>
            <person name="Gordon D."/>
            <person name="Heinemann S.H."/>
        </authorList>
    </citation>
    <scope>FUNCTION</scope>
</reference>
<reference key="3">
    <citation type="journal article" date="1999" name="J. Neurosci.">
        <title>A scorpion alpha-like toxin that is active on insects and mammals reveals an unexpected specificity and distribution of sodium channel subtypes in rat brain neurons.</title>
        <authorList>
            <person name="Gilles N."/>
            <person name="Blanchet C."/>
            <person name="Shichor I."/>
            <person name="Zaninetti M."/>
            <person name="Lotan I."/>
            <person name="Bertrand D."/>
            <person name="Gordon D."/>
        </authorList>
    </citation>
    <scope>FUNCTION IN RAT BRAIN NEURONS</scope>
</reference>
<reference key="4">
    <citation type="journal article" date="2001" name="J. Gen. Physiol.">
        <title>Interaction of scorpion alpha-toxins with cardiac sodium channels: binding properties and enhancement of slow inactivation.</title>
        <authorList>
            <person name="Chen H."/>
            <person name="Heinemann S.H."/>
        </authorList>
    </citation>
    <scope>FUNCTION ON HUMAN CARDIAC SODIUM CHANNELS</scope>
</reference>
<reference key="5">
    <citation type="journal article" date="2007" name="FEBS J.">
        <title>The unique pharmacology of the scorpion alpha-like toxin Lqh3 is associated with its flexible C-tail.</title>
        <authorList>
            <person name="Karbat I."/>
            <person name="Kahn R."/>
            <person name="Cohen L."/>
            <person name="Ilan N."/>
            <person name="Gilles N."/>
            <person name="Corzo G."/>
            <person name="Froy O."/>
            <person name="Gur M."/>
            <person name="Albrecht G."/>
            <person name="Heinemann S.H."/>
            <person name="Gordon D."/>
            <person name="Gurevitz M."/>
        </authorList>
    </citation>
    <scope>FUNCTION</scope>
</reference>
<reference key="6">
    <citation type="journal article" date="1999" name="J. Mol. Biol.">
        <title>NMR structures and activity of a novel alpha-like toxin from the scorpion Leiurus quinquestriatus hebraeus.</title>
        <authorList>
            <person name="Krimm I."/>
            <person name="Gilles N."/>
            <person name="Sautiere P."/>
            <person name="Stankiewicz M."/>
            <person name="Pelhate M."/>
            <person name="Gordon D."/>
            <person name="Lancelin J.-M."/>
        </authorList>
    </citation>
    <scope>STRUCTURE BY NMR</scope>
    <scope>DISULFIDE BONDS</scope>
</reference>
<reference key="7">
    <citation type="journal article" date="2000" name="J. Neurochem.">
        <title>Structural implications on the interaction of scorpion alpha-like toxins with the sodium channel receptor site inferred from toxin iodination and pH-dependent binding.</title>
        <authorList>
            <person name="Gilles N."/>
            <person name="Krimm I."/>
            <person name="Bouet F."/>
            <person name="Froy O."/>
            <person name="Gurevitz M."/>
            <person name="Lancelin J.-M."/>
            <person name="Gordon D."/>
        </authorList>
    </citation>
    <scope>STRUCTURE BY NMR</scope>
    <scope>DISULFIDE BONDS</scope>
</reference>
<comment type="function">
    <text evidence="2 3 4 5 6">Alpha toxins bind voltage-independently at site-3 of sodium channels (Nav) and inhibit the inactivation of the activated channels, thereby blocking neuronal transmission. The dissociation is voltage-dependent. This alpha-like toxin is highly toxic to insects and competes with LqhaIT on binding to insect sodium channels. Differs from classical anti-mammalian alpha-toxins as it inhibits sodium channel inactivation in cell bodies of hippocampus brain neurons, on which the anti-mammalian Lqh2 is inactive, and is unable to affect Nav1.2 in the rat brain, on which Lqh2 is highly active. Moreover, its pharmacological properties are unique in that its binding affinity for insect channels drops &gt;30-fold at pH 8.5 versus pH 6.5, and its rate of association with receptor site-3 on both insect and mammalian sodium channels is 4-15-fold slower compared with LqhaIT and Lqh2.</text>
</comment>
<comment type="subunit">
    <text>Monomer.</text>
</comment>
<comment type="subcellular location">
    <subcellularLocation>
        <location evidence="6">Secreted</location>
    </subcellularLocation>
</comment>
<comment type="tissue specificity">
    <text evidence="8">Expressed by the venom gland.</text>
</comment>
<comment type="domain">
    <text evidence="7">Has the structural arrangement of an alpha-helix connected to antiparallel beta-sheets by disulfide bonds (CS-alpha/beta).</text>
</comment>
<comment type="toxic dose">
    <text evidence="6">LD(50) is 50 mg/kg by intracerebroventricular injection into mice.</text>
</comment>
<comment type="similarity">
    <text evidence="7">Belongs to the long (4 C-C) scorpion toxin superfamily. Sodium channel inhibitor family. Alpha subfamily.</text>
</comment>
<keyword id="KW-0002">3D-structure</keyword>
<keyword id="KW-0027">Amidation</keyword>
<keyword id="KW-0903">Direct protein sequencing</keyword>
<keyword id="KW-1015">Disulfide bond</keyword>
<keyword id="KW-0872">Ion channel impairing toxin</keyword>
<keyword id="KW-0528">Neurotoxin</keyword>
<keyword id="KW-0964">Secreted</keyword>
<keyword id="KW-0800">Toxin</keyword>
<keyword id="KW-0738">Voltage-gated sodium channel impairing toxin</keyword>
<proteinExistence type="evidence at protein level"/>
<accession>P56678</accession>
<organism>
    <name type="scientific">Leiurus hebraeus</name>
    <name type="common">Hebrew deathstalker scorpion</name>
    <name type="synonym">Leiurus quinquestriatus hebraeus</name>
    <dbReference type="NCBI Taxonomy" id="2899558"/>
    <lineage>
        <taxon>Eukaryota</taxon>
        <taxon>Metazoa</taxon>
        <taxon>Ecdysozoa</taxon>
        <taxon>Arthropoda</taxon>
        <taxon>Chelicerata</taxon>
        <taxon>Arachnida</taxon>
        <taxon>Scorpiones</taxon>
        <taxon>Buthida</taxon>
        <taxon>Buthoidea</taxon>
        <taxon>Buthidae</taxon>
        <taxon>Leiurus</taxon>
    </lineage>
</organism>
<protein>
    <recommendedName>
        <fullName>Alpha-like toxin Lqh3</fullName>
    </recommendedName>
    <alternativeName>
        <fullName>Lqh III</fullName>
        <shortName>LqhIII</shortName>
    </alternativeName>
</protein>
<feature type="chain" id="PRO_0000066784" description="Alpha-like toxin Lqh3">
    <location>
        <begin position="1"/>
        <end position="67"/>
    </location>
</feature>
<feature type="domain" description="LCN-type CS-alpha/beta" evidence="1">
    <location>
        <begin position="2"/>
        <end position="66"/>
    </location>
</feature>
<feature type="modified residue" description="Serine amide" evidence="6">
    <location>
        <position position="67"/>
    </location>
</feature>
<feature type="disulfide bond" evidence="1">
    <location>
        <begin position="12"/>
        <end position="65"/>
    </location>
</feature>
<feature type="disulfide bond" evidence="1">
    <location>
        <begin position="16"/>
        <end position="37"/>
    </location>
</feature>
<feature type="disulfide bond" evidence="1">
    <location>
        <begin position="23"/>
        <end position="47"/>
    </location>
</feature>
<feature type="disulfide bond" evidence="1">
    <location>
        <begin position="27"/>
        <end position="49"/>
    </location>
</feature>
<feature type="strand" evidence="10">
    <location>
        <begin position="2"/>
        <end position="5"/>
    </location>
</feature>
<feature type="turn" evidence="10">
    <location>
        <begin position="9"/>
        <end position="11"/>
    </location>
</feature>
<feature type="strand" evidence="9">
    <location>
        <begin position="18"/>
        <end position="20"/>
    </location>
</feature>
<feature type="helix" evidence="10">
    <location>
        <begin position="24"/>
        <end position="30"/>
    </location>
</feature>
<feature type="strand" evidence="10">
    <location>
        <begin position="36"/>
        <end position="40"/>
    </location>
</feature>
<feature type="turn" evidence="10">
    <location>
        <begin position="41"/>
        <end position="43"/>
    </location>
</feature>
<feature type="strand" evidence="10">
    <location>
        <begin position="44"/>
        <end position="52"/>
    </location>
</feature>
<feature type="strand" evidence="11">
    <location>
        <begin position="54"/>
        <end position="56"/>
    </location>
</feature>